<gene>
    <name type="ordered locus">MT0954</name>
</gene>
<comment type="similarity">
    <text evidence="3">Belongs to the short-chain dehydrogenases/reductases (SDR) family.</text>
</comment>
<keyword id="KW-0560">Oxidoreductase</keyword>
<keyword id="KW-1185">Reference proteome</keyword>
<name>Y927C_MYCTO</name>
<feature type="chain" id="PRO_0000428321" description="Uncharacterized oxidoreductase MT0954">
    <location>
        <begin position="1"/>
        <end position="263"/>
    </location>
</feature>
<feature type="active site" description="Proton acceptor" evidence="2">
    <location>
        <position position="160"/>
    </location>
</feature>
<feature type="binding site" evidence="1">
    <location>
        <begin position="17"/>
        <end position="41"/>
    </location>
    <ligand>
        <name>NAD(+)</name>
        <dbReference type="ChEBI" id="CHEBI:57540"/>
    </ligand>
</feature>
<feature type="binding site" evidence="1">
    <location>
        <position position="147"/>
    </location>
    <ligand>
        <name>substrate</name>
    </ligand>
</feature>
<feature type="binding site" evidence="1">
    <location>
        <position position="164"/>
    </location>
    <ligand>
        <name>NAD(+)</name>
        <dbReference type="ChEBI" id="CHEBI:57540"/>
    </ligand>
</feature>
<proteinExistence type="inferred from homology"/>
<sequence>MILDMFRLDDKVAVITGGGRGLGAAIALAFAQAGADVLIASRTSSELDAVAEQIRAAGRRAHTVAADLAHPEVTAQLAGQAVGAFGKLDIVVNNVGGTMPNTLLSTSTKDLADAFAFNVGTAHALTVAAVPLMLEHSGGGSVINISSTMGRLAARGFAAYGTAKAALAHYTRLAALDLCPRVRVNAIAPGSILTSALEVVAANDELRAPMEQATPLRRLGDPVDIAAAAVYLASPAGSFLTGKTLEVDGGLTFPNLDLPIPDL</sequence>
<accession>P9WGQ4</accession>
<accession>L0T570</accession>
<accession>O05919</accession>
<accession>Q7D928</accession>
<reference key="1">
    <citation type="journal article" date="2002" name="J. Bacteriol.">
        <title>Whole-genome comparison of Mycobacterium tuberculosis clinical and laboratory strains.</title>
        <authorList>
            <person name="Fleischmann R.D."/>
            <person name="Alland D."/>
            <person name="Eisen J.A."/>
            <person name="Carpenter L."/>
            <person name="White O."/>
            <person name="Peterson J.D."/>
            <person name="DeBoy R.T."/>
            <person name="Dodson R.J."/>
            <person name="Gwinn M.L."/>
            <person name="Haft D.H."/>
            <person name="Hickey E.K."/>
            <person name="Kolonay J.F."/>
            <person name="Nelson W.C."/>
            <person name="Umayam L.A."/>
            <person name="Ermolaeva M.D."/>
            <person name="Salzberg S.L."/>
            <person name="Delcher A."/>
            <person name="Utterback T.R."/>
            <person name="Weidman J.F."/>
            <person name="Khouri H.M."/>
            <person name="Gill J."/>
            <person name="Mikula A."/>
            <person name="Bishai W."/>
            <person name="Jacobs W.R. Jr."/>
            <person name="Venter J.C."/>
            <person name="Fraser C.M."/>
        </authorList>
    </citation>
    <scope>NUCLEOTIDE SEQUENCE [LARGE SCALE GENOMIC DNA]</scope>
    <source>
        <strain>CDC 1551 / Oshkosh</strain>
    </source>
</reference>
<dbReference type="EC" id="1.-.-.-"/>
<dbReference type="EMBL" id="AE000516">
    <property type="protein sequence ID" value="AAK45201.1"/>
    <property type="molecule type" value="Genomic_DNA"/>
</dbReference>
<dbReference type="PIR" id="G70583">
    <property type="entry name" value="G70583"/>
</dbReference>
<dbReference type="RefSeq" id="WP_003404769.1">
    <property type="nucleotide sequence ID" value="NZ_KK341227.1"/>
</dbReference>
<dbReference type="SMR" id="P9WGQ4"/>
<dbReference type="KEGG" id="mtc:MT0954"/>
<dbReference type="PATRIC" id="fig|83331.31.peg.1024"/>
<dbReference type="HOGENOM" id="CLU_010194_1_3_11"/>
<dbReference type="Proteomes" id="UP000001020">
    <property type="component" value="Chromosome"/>
</dbReference>
<dbReference type="GO" id="GO:0016491">
    <property type="term" value="F:oxidoreductase activity"/>
    <property type="evidence" value="ECO:0007669"/>
    <property type="project" value="UniProtKB-KW"/>
</dbReference>
<dbReference type="CDD" id="cd05233">
    <property type="entry name" value="SDR_c"/>
    <property type="match status" value="1"/>
</dbReference>
<dbReference type="FunFam" id="3.40.50.720:FF:000084">
    <property type="entry name" value="Short-chain dehydrogenase reductase"/>
    <property type="match status" value="1"/>
</dbReference>
<dbReference type="Gene3D" id="3.40.50.720">
    <property type="entry name" value="NAD(P)-binding Rossmann-like Domain"/>
    <property type="match status" value="1"/>
</dbReference>
<dbReference type="InterPro" id="IPR036291">
    <property type="entry name" value="NAD(P)-bd_dom_sf"/>
</dbReference>
<dbReference type="InterPro" id="IPR020904">
    <property type="entry name" value="Sc_DH/Rdtase_CS"/>
</dbReference>
<dbReference type="InterPro" id="IPR002347">
    <property type="entry name" value="SDR_fam"/>
</dbReference>
<dbReference type="NCBIfam" id="NF005559">
    <property type="entry name" value="PRK07231.1"/>
    <property type="match status" value="1"/>
</dbReference>
<dbReference type="NCBIfam" id="NF005873">
    <property type="entry name" value="PRK07814.1"/>
    <property type="match status" value="1"/>
</dbReference>
<dbReference type="PANTHER" id="PTHR43639">
    <property type="entry name" value="OXIDOREDUCTASE, SHORT-CHAIN DEHYDROGENASE/REDUCTASE FAMILY (AFU_ORTHOLOGUE AFUA_5G02870)"/>
    <property type="match status" value="1"/>
</dbReference>
<dbReference type="PANTHER" id="PTHR43639:SF1">
    <property type="entry name" value="SHORT-CHAIN DEHYDROGENASE_REDUCTASE FAMILY PROTEIN"/>
    <property type="match status" value="1"/>
</dbReference>
<dbReference type="Pfam" id="PF13561">
    <property type="entry name" value="adh_short_C2"/>
    <property type="match status" value="1"/>
</dbReference>
<dbReference type="PRINTS" id="PR00081">
    <property type="entry name" value="GDHRDH"/>
</dbReference>
<dbReference type="PRINTS" id="PR00080">
    <property type="entry name" value="SDRFAMILY"/>
</dbReference>
<dbReference type="SUPFAM" id="SSF51735">
    <property type="entry name" value="NAD(P)-binding Rossmann-fold domains"/>
    <property type="match status" value="1"/>
</dbReference>
<dbReference type="PROSITE" id="PS00061">
    <property type="entry name" value="ADH_SHORT"/>
    <property type="match status" value="1"/>
</dbReference>
<evidence type="ECO:0000250" key="1"/>
<evidence type="ECO:0000255" key="2">
    <source>
        <dbReference type="PROSITE-ProRule" id="PRU10001"/>
    </source>
</evidence>
<evidence type="ECO:0000305" key="3"/>
<protein>
    <recommendedName>
        <fullName>Uncharacterized oxidoreductase MT0954</fullName>
        <ecNumber>1.-.-.-</ecNumber>
    </recommendedName>
</protein>
<organism>
    <name type="scientific">Mycobacterium tuberculosis (strain CDC 1551 / Oshkosh)</name>
    <dbReference type="NCBI Taxonomy" id="83331"/>
    <lineage>
        <taxon>Bacteria</taxon>
        <taxon>Bacillati</taxon>
        <taxon>Actinomycetota</taxon>
        <taxon>Actinomycetes</taxon>
        <taxon>Mycobacteriales</taxon>
        <taxon>Mycobacteriaceae</taxon>
        <taxon>Mycobacterium</taxon>
        <taxon>Mycobacterium tuberculosis complex</taxon>
    </lineage>
</organism>